<dbReference type="EMBL" id="AE004091">
    <property type="protein sequence ID" value="AAG08133.1"/>
    <property type="molecule type" value="Genomic_DNA"/>
</dbReference>
<dbReference type="PIR" id="B83053">
    <property type="entry name" value="B83053"/>
</dbReference>
<dbReference type="RefSeq" id="NP_253435.1">
    <property type="nucleotide sequence ID" value="NC_002516.2"/>
</dbReference>
<dbReference type="RefSeq" id="WP_003095194.1">
    <property type="nucleotide sequence ID" value="NZ_QZGE01000018.1"/>
</dbReference>
<dbReference type="SMR" id="Q9HV52"/>
<dbReference type="FunCoup" id="Q9HV52">
    <property type="interactions" value="297"/>
</dbReference>
<dbReference type="STRING" id="208964.PA4747"/>
<dbReference type="PaxDb" id="208964-PA4747"/>
<dbReference type="GeneID" id="77223284"/>
<dbReference type="GeneID" id="881707"/>
<dbReference type="KEGG" id="pae:PA4747"/>
<dbReference type="PATRIC" id="fig|208964.12.peg.4973"/>
<dbReference type="PseudoCAP" id="PA4747"/>
<dbReference type="HOGENOM" id="CLU_094156_2_2_6"/>
<dbReference type="InParanoid" id="Q9HV52"/>
<dbReference type="OrthoDB" id="9813947at2"/>
<dbReference type="BioCyc" id="PAER208964:G1FZ6-4859-MONOMER"/>
<dbReference type="Proteomes" id="UP000002438">
    <property type="component" value="Chromosome"/>
</dbReference>
<dbReference type="GO" id="GO:0005886">
    <property type="term" value="C:plasma membrane"/>
    <property type="evidence" value="ECO:0000318"/>
    <property type="project" value="GO_Central"/>
</dbReference>
<dbReference type="GO" id="GO:0015450">
    <property type="term" value="F:protein-transporting ATPase activity"/>
    <property type="evidence" value="ECO:0007669"/>
    <property type="project" value="InterPro"/>
</dbReference>
<dbReference type="GO" id="GO:0065002">
    <property type="term" value="P:intracellular protein transmembrane transport"/>
    <property type="evidence" value="ECO:0000318"/>
    <property type="project" value="GO_Central"/>
</dbReference>
<dbReference type="GO" id="GO:0009306">
    <property type="term" value="P:protein secretion"/>
    <property type="evidence" value="ECO:0007669"/>
    <property type="project" value="InterPro"/>
</dbReference>
<dbReference type="GO" id="GO:0043952">
    <property type="term" value="P:protein transport by the Sec complex"/>
    <property type="evidence" value="ECO:0000318"/>
    <property type="project" value="GO_Central"/>
</dbReference>
<dbReference type="InterPro" id="IPR004692">
    <property type="entry name" value="SecG"/>
</dbReference>
<dbReference type="NCBIfam" id="TIGR00810">
    <property type="entry name" value="secG"/>
    <property type="match status" value="1"/>
</dbReference>
<dbReference type="PANTHER" id="PTHR34182">
    <property type="entry name" value="PROTEIN-EXPORT MEMBRANE PROTEIN SECG"/>
    <property type="match status" value="1"/>
</dbReference>
<dbReference type="PANTHER" id="PTHR34182:SF1">
    <property type="entry name" value="PROTEIN-EXPORT MEMBRANE PROTEIN SECG"/>
    <property type="match status" value="1"/>
</dbReference>
<dbReference type="Pfam" id="PF03840">
    <property type="entry name" value="SecG"/>
    <property type="match status" value="1"/>
</dbReference>
<dbReference type="PRINTS" id="PR01651">
    <property type="entry name" value="SECGEXPORT"/>
</dbReference>
<feature type="chain" id="PRO_0000157237" description="Protein-export membrane protein SecG">
    <location>
        <begin position="1"/>
        <end position="129"/>
    </location>
</feature>
<feature type="transmembrane region" description="Helical" evidence="2">
    <location>
        <begin position="5"/>
        <end position="25"/>
    </location>
</feature>
<feature type="transmembrane region" description="Helical" evidence="2">
    <location>
        <begin position="56"/>
        <end position="76"/>
    </location>
</feature>
<feature type="region of interest" description="Disordered" evidence="3">
    <location>
        <begin position="93"/>
        <end position="129"/>
    </location>
</feature>
<name>SECG_PSEAE</name>
<accession>Q9HV52</accession>
<sequence length="129" mass="13207">MLEKVVIVVHLLMALGLVGLILVQHGKGADAGASFGAGASATVFGSQGSATFLSRITGILAAVFFLTSLGLAYFAKEKSDALQHIGLPDPAVLEQKQEKAPAADDVPVLQEQSKPAESAGDVPAAPEQK</sequence>
<protein>
    <recommendedName>
        <fullName>Protein-export membrane protein SecG</fullName>
    </recommendedName>
</protein>
<evidence type="ECO:0000250" key="1"/>
<evidence type="ECO:0000255" key="2"/>
<evidence type="ECO:0000256" key="3">
    <source>
        <dbReference type="SAM" id="MobiDB-lite"/>
    </source>
</evidence>
<evidence type="ECO:0000305" key="4"/>
<organism>
    <name type="scientific">Pseudomonas aeruginosa (strain ATCC 15692 / DSM 22644 / CIP 104116 / JCM 14847 / LMG 12228 / 1C / PRS 101 / PAO1)</name>
    <dbReference type="NCBI Taxonomy" id="208964"/>
    <lineage>
        <taxon>Bacteria</taxon>
        <taxon>Pseudomonadati</taxon>
        <taxon>Pseudomonadota</taxon>
        <taxon>Gammaproteobacteria</taxon>
        <taxon>Pseudomonadales</taxon>
        <taxon>Pseudomonadaceae</taxon>
        <taxon>Pseudomonas</taxon>
    </lineage>
</organism>
<gene>
    <name type="primary">secG</name>
    <name type="ordered locus">PA4747</name>
</gene>
<reference key="1">
    <citation type="journal article" date="2000" name="Nature">
        <title>Complete genome sequence of Pseudomonas aeruginosa PAO1, an opportunistic pathogen.</title>
        <authorList>
            <person name="Stover C.K."/>
            <person name="Pham X.-Q.T."/>
            <person name="Erwin A.L."/>
            <person name="Mizoguchi S.D."/>
            <person name="Warrener P."/>
            <person name="Hickey M.J."/>
            <person name="Brinkman F.S.L."/>
            <person name="Hufnagle W.O."/>
            <person name="Kowalik D.J."/>
            <person name="Lagrou M."/>
            <person name="Garber R.L."/>
            <person name="Goltry L."/>
            <person name="Tolentino E."/>
            <person name="Westbrock-Wadman S."/>
            <person name="Yuan Y."/>
            <person name="Brody L.L."/>
            <person name="Coulter S.N."/>
            <person name="Folger K.R."/>
            <person name="Kas A."/>
            <person name="Larbig K."/>
            <person name="Lim R.M."/>
            <person name="Smith K.A."/>
            <person name="Spencer D.H."/>
            <person name="Wong G.K.-S."/>
            <person name="Wu Z."/>
            <person name="Paulsen I.T."/>
            <person name="Reizer J."/>
            <person name="Saier M.H. Jr."/>
            <person name="Hancock R.E.W."/>
            <person name="Lory S."/>
            <person name="Olson M.V."/>
        </authorList>
    </citation>
    <scope>NUCLEOTIDE SEQUENCE [LARGE SCALE GENOMIC DNA]</scope>
    <source>
        <strain>ATCC 15692 / DSM 22644 / CIP 104116 / JCM 14847 / LMG 12228 / 1C / PRS 101 / PAO1</strain>
    </source>
</reference>
<keyword id="KW-0997">Cell inner membrane</keyword>
<keyword id="KW-1003">Cell membrane</keyword>
<keyword id="KW-0472">Membrane</keyword>
<keyword id="KW-0653">Protein transport</keyword>
<keyword id="KW-1185">Reference proteome</keyword>
<keyword id="KW-0811">Translocation</keyword>
<keyword id="KW-0812">Transmembrane</keyword>
<keyword id="KW-1133">Transmembrane helix</keyword>
<keyword id="KW-0813">Transport</keyword>
<comment type="function">
    <text evidence="1">Involved in protein export. Participates in an early event of protein translocation (By similarity).</text>
</comment>
<comment type="subcellular location">
    <subcellularLocation>
        <location evidence="1">Cell inner membrane</location>
        <topology evidence="1">Multi-pass membrane protein</topology>
    </subcellularLocation>
</comment>
<comment type="similarity">
    <text evidence="4">Belongs to the SecG family.</text>
</comment>
<proteinExistence type="inferred from homology"/>